<organism>
    <name type="scientific">Haemophilus influenzae (strain PittEE)</name>
    <dbReference type="NCBI Taxonomy" id="374930"/>
    <lineage>
        <taxon>Bacteria</taxon>
        <taxon>Pseudomonadati</taxon>
        <taxon>Pseudomonadota</taxon>
        <taxon>Gammaproteobacteria</taxon>
        <taxon>Pasteurellales</taxon>
        <taxon>Pasteurellaceae</taxon>
        <taxon>Haemophilus</taxon>
    </lineage>
</organism>
<accession>A5UBF9</accession>
<protein>
    <recommendedName>
        <fullName evidence="1">Bifunctional uridylyltransferase/uridylyl-removing enzyme</fullName>
        <shortName evidence="1">UTase/UR</shortName>
    </recommendedName>
    <alternativeName>
        <fullName evidence="1">Bifunctional [protein-PII] modification enzyme</fullName>
    </alternativeName>
    <alternativeName>
        <fullName evidence="1">Bifunctional nitrogen sensor protein</fullName>
    </alternativeName>
    <domain>
        <recommendedName>
            <fullName evidence="1">[Protein-PII] uridylyltransferase</fullName>
            <shortName evidence="1">PII uridylyltransferase</shortName>
            <shortName evidence="1">UTase</shortName>
            <ecNumber evidence="1">2.7.7.59</ecNumber>
        </recommendedName>
    </domain>
    <domain>
        <recommendedName>
            <fullName evidence="1">[Protein-PII]-UMP uridylyl-removing enzyme</fullName>
            <shortName evidence="1">UR</shortName>
            <ecNumber evidence="1">3.1.4.-</ecNumber>
        </recommendedName>
    </domain>
</protein>
<sequence length="863" mass="100197">MLFPLSLSSPLTPSAVKIERENLKQFELENFSRYSIFELVENRSDFYDALLIQLWQEMGLSEQLGISLIAVGGYGRREMFPLSDLDFLILVEQTPIPEIEEKITQFIQFLWDCGFEVGHSVRTLQQCESEGKQDITIATNLLEARFLIGNRPHFDALNELVKRADFWSKEGFFNAKVQEQIERYQRYHNTAYNLEPDIKYSPGGLRDLHLLYWVALHHSGAQTLEDILQSGFIYPQEYQQLQESRAFLFKVRFALHLILTRYDNRLLFDRQIKVSELLGFRGEGNQAVEKMMKCFFQALHRISLISNLLIQHYRENVLSSNQATVIEQLDDDFQLINQCLCLRNSLVFQEKPARILDLFFYLTQYEQANIHSDTLRQLQISLEQLPQKLCEIPEAREKFLRLFNQPNSIKRAFMPMHQYGVLTAYLPQWQAIEGLMQFDLFHIYTVDEHTLRVMLKLESFLSQESAQEHPIAHRIFSQLSDRTLLYIAALFHDIAKGRGGDHAELGAKDVANFARLHGLDRREIDTLAWLVQSHLLMSITAQRRDIHDPEVVMNFAEAVQNQVRLDYLTCLTVADICATNGNLWNSWKRSLFASLYEFTEQQFAQGMKELLDYSEKSAENRKLAQQILTQDYSDIMPISIDQLWERCPEDYFVRNTPKQIAWHTSLLVDLVEALLVKISNRFSLGGTEVFIYCQDQPHLFNKVVSTIGAKKFSIHDAQIITTQDGYVFDSFIITELNGELVEFDRRRELEQALTLALQSEKLSALSITPNRQLQHFTVQTDVRFLHENKKEHTEMELVALDKAGLLAQVSQIFSELNLNLLNAKITTVGEKAEDFFILTNQFGQALDSQQREILRNVLYRNIG</sequence>
<keyword id="KW-0378">Hydrolase</keyword>
<keyword id="KW-0460">Magnesium</keyword>
<keyword id="KW-0511">Multifunctional enzyme</keyword>
<keyword id="KW-0548">Nucleotidyltransferase</keyword>
<keyword id="KW-0677">Repeat</keyword>
<keyword id="KW-0808">Transferase</keyword>
<feature type="chain" id="PRO_1000022344" description="Bifunctional uridylyltransferase/uridylyl-removing enzyme">
    <location>
        <begin position="1"/>
        <end position="863"/>
    </location>
</feature>
<feature type="domain" description="HD" evidence="2">
    <location>
        <begin position="446"/>
        <end position="568"/>
    </location>
</feature>
<feature type="domain" description="ACT 1" evidence="1">
    <location>
        <begin position="688"/>
        <end position="772"/>
    </location>
</feature>
<feature type="domain" description="ACT 2" evidence="1">
    <location>
        <begin position="794"/>
        <end position="863"/>
    </location>
</feature>
<feature type="region of interest" description="Uridylyltransferase">
    <location>
        <begin position="1"/>
        <end position="328"/>
    </location>
</feature>
<feature type="region of interest" description="Uridylyl-removing">
    <location>
        <begin position="329"/>
        <end position="687"/>
    </location>
</feature>
<name>GLND_HAEIE</name>
<reference key="1">
    <citation type="journal article" date="2007" name="Genome Biol.">
        <title>Characterization and modeling of the Haemophilus influenzae core and supragenomes based on the complete genomic sequences of Rd and 12 clinical nontypeable strains.</title>
        <authorList>
            <person name="Hogg J.S."/>
            <person name="Hu F.Z."/>
            <person name="Janto B."/>
            <person name="Boissy R."/>
            <person name="Hayes J."/>
            <person name="Keefe R."/>
            <person name="Post J.C."/>
            <person name="Ehrlich G.D."/>
        </authorList>
    </citation>
    <scope>NUCLEOTIDE SEQUENCE [LARGE SCALE GENOMIC DNA]</scope>
    <source>
        <strain>PittEE</strain>
    </source>
</reference>
<gene>
    <name evidence="1" type="primary">glnD</name>
    <name type="ordered locus">CGSHiEE_03445</name>
</gene>
<comment type="function">
    <text evidence="1">Modifies, by uridylylation and deuridylylation, the PII regulatory proteins (GlnB and homologs), in response to the nitrogen status of the cell that GlnD senses through the glutamine level. Under low glutamine levels, catalyzes the conversion of the PII proteins and UTP to PII-UMP and PPi, while under higher glutamine levels, GlnD hydrolyzes PII-UMP to PII and UMP (deuridylylation). Thus, controls uridylylation state and activity of the PII proteins, and plays an important role in the regulation of nitrogen assimilation and metabolism.</text>
</comment>
<comment type="catalytic activity">
    <reaction evidence="1">
        <text>[protein-PII]-L-tyrosine + UTP = [protein-PII]-uridylyl-L-tyrosine + diphosphate</text>
        <dbReference type="Rhea" id="RHEA:13673"/>
        <dbReference type="Rhea" id="RHEA-COMP:12147"/>
        <dbReference type="Rhea" id="RHEA-COMP:12148"/>
        <dbReference type="ChEBI" id="CHEBI:33019"/>
        <dbReference type="ChEBI" id="CHEBI:46398"/>
        <dbReference type="ChEBI" id="CHEBI:46858"/>
        <dbReference type="ChEBI" id="CHEBI:90602"/>
        <dbReference type="EC" id="2.7.7.59"/>
    </reaction>
</comment>
<comment type="catalytic activity">
    <reaction evidence="1">
        <text>[protein-PII]-uridylyl-L-tyrosine + H2O = [protein-PII]-L-tyrosine + UMP + H(+)</text>
        <dbReference type="Rhea" id="RHEA:48600"/>
        <dbReference type="Rhea" id="RHEA-COMP:12147"/>
        <dbReference type="Rhea" id="RHEA-COMP:12148"/>
        <dbReference type="ChEBI" id="CHEBI:15377"/>
        <dbReference type="ChEBI" id="CHEBI:15378"/>
        <dbReference type="ChEBI" id="CHEBI:46858"/>
        <dbReference type="ChEBI" id="CHEBI:57865"/>
        <dbReference type="ChEBI" id="CHEBI:90602"/>
    </reaction>
</comment>
<comment type="cofactor">
    <cofactor evidence="1">
        <name>Mg(2+)</name>
        <dbReference type="ChEBI" id="CHEBI:18420"/>
    </cofactor>
</comment>
<comment type="activity regulation">
    <text evidence="1">Uridylyltransferase (UTase) activity is inhibited by glutamine, while glutamine activates uridylyl-removing (UR) activity.</text>
</comment>
<comment type="domain">
    <text evidence="1">Has four distinct domains: an N-terminal nucleotidyltransferase (NT) domain responsible for UTase activity, a central HD domain that encodes UR activity, and two C-terminal ACT domains that seem to have a role in glutamine sensing.</text>
</comment>
<comment type="similarity">
    <text evidence="1">Belongs to the GlnD family.</text>
</comment>
<dbReference type="EC" id="2.7.7.59" evidence="1"/>
<dbReference type="EC" id="3.1.4.-" evidence="1"/>
<dbReference type="EMBL" id="CP000671">
    <property type="protein sequence ID" value="ABQ98110.1"/>
    <property type="molecule type" value="Genomic_DNA"/>
</dbReference>
<dbReference type="SMR" id="A5UBF9"/>
<dbReference type="KEGG" id="hip:CGSHiEE_03445"/>
<dbReference type="HOGENOM" id="CLU_012833_0_0_6"/>
<dbReference type="GO" id="GO:0008773">
    <property type="term" value="F:[protein-PII] uridylyltransferase activity"/>
    <property type="evidence" value="ECO:0007669"/>
    <property type="project" value="UniProtKB-UniRule"/>
</dbReference>
<dbReference type="GO" id="GO:0008081">
    <property type="term" value="F:phosphoric diester hydrolase activity"/>
    <property type="evidence" value="ECO:0007669"/>
    <property type="project" value="UniProtKB-UniRule"/>
</dbReference>
<dbReference type="GO" id="GO:0006808">
    <property type="term" value="P:regulation of nitrogen utilization"/>
    <property type="evidence" value="ECO:0007669"/>
    <property type="project" value="UniProtKB-UniRule"/>
</dbReference>
<dbReference type="CDD" id="cd04899">
    <property type="entry name" value="ACT_ACR-UUR-like_2"/>
    <property type="match status" value="1"/>
</dbReference>
<dbReference type="CDD" id="cd04900">
    <property type="entry name" value="ACT_UUR-like_1"/>
    <property type="match status" value="1"/>
</dbReference>
<dbReference type="CDD" id="cd00077">
    <property type="entry name" value="HDc"/>
    <property type="match status" value="1"/>
</dbReference>
<dbReference type="CDD" id="cd05401">
    <property type="entry name" value="NT_GlnE_GlnD_like"/>
    <property type="match status" value="1"/>
</dbReference>
<dbReference type="Gene3D" id="1.10.3210.10">
    <property type="entry name" value="Hypothetical protein af1432"/>
    <property type="match status" value="1"/>
</dbReference>
<dbReference type="HAMAP" id="MF_00277">
    <property type="entry name" value="PII_uridylyl_transf"/>
    <property type="match status" value="1"/>
</dbReference>
<dbReference type="InterPro" id="IPR045865">
    <property type="entry name" value="ACT-like_dom_sf"/>
</dbReference>
<dbReference type="InterPro" id="IPR002912">
    <property type="entry name" value="ACT_dom"/>
</dbReference>
<dbReference type="InterPro" id="IPR003607">
    <property type="entry name" value="HD/PDEase_dom"/>
</dbReference>
<dbReference type="InterPro" id="IPR006674">
    <property type="entry name" value="HD_domain"/>
</dbReference>
<dbReference type="InterPro" id="IPR043519">
    <property type="entry name" value="NT_sf"/>
</dbReference>
<dbReference type="InterPro" id="IPR013546">
    <property type="entry name" value="PII_UdlTrfase/GS_AdlTrfase"/>
</dbReference>
<dbReference type="InterPro" id="IPR010043">
    <property type="entry name" value="UTase/UR"/>
</dbReference>
<dbReference type="NCBIfam" id="NF002487">
    <property type="entry name" value="PRK01759.1"/>
    <property type="match status" value="1"/>
</dbReference>
<dbReference type="NCBIfam" id="TIGR01693">
    <property type="entry name" value="UTase_glnD"/>
    <property type="match status" value="1"/>
</dbReference>
<dbReference type="PANTHER" id="PTHR47320">
    <property type="entry name" value="BIFUNCTIONAL URIDYLYLTRANSFERASE/URIDYLYL-REMOVING ENZYME"/>
    <property type="match status" value="1"/>
</dbReference>
<dbReference type="PANTHER" id="PTHR47320:SF1">
    <property type="entry name" value="BIFUNCTIONAL URIDYLYLTRANSFERASE_URIDYLYL-REMOVING ENZYME"/>
    <property type="match status" value="1"/>
</dbReference>
<dbReference type="Pfam" id="PF01842">
    <property type="entry name" value="ACT"/>
    <property type="match status" value="2"/>
</dbReference>
<dbReference type="Pfam" id="PF08335">
    <property type="entry name" value="GlnD_UR_UTase"/>
    <property type="match status" value="1"/>
</dbReference>
<dbReference type="Pfam" id="PF01966">
    <property type="entry name" value="HD"/>
    <property type="match status" value="1"/>
</dbReference>
<dbReference type="PIRSF" id="PIRSF006288">
    <property type="entry name" value="PII_uridyltransf"/>
    <property type="match status" value="1"/>
</dbReference>
<dbReference type="SMART" id="SM00471">
    <property type="entry name" value="HDc"/>
    <property type="match status" value="1"/>
</dbReference>
<dbReference type="SUPFAM" id="SSF55021">
    <property type="entry name" value="ACT-like"/>
    <property type="match status" value="2"/>
</dbReference>
<dbReference type="SUPFAM" id="SSF109604">
    <property type="entry name" value="HD-domain/PDEase-like"/>
    <property type="match status" value="1"/>
</dbReference>
<dbReference type="SUPFAM" id="SSF81301">
    <property type="entry name" value="Nucleotidyltransferase"/>
    <property type="match status" value="1"/>
</dbReference>
<dbReference type="SUPFAM" id="SSF81593">
    <property type="entry name" value="Nucleotidyltransferase substrate binding subunit/domain"/>
    <property type="match status" value="1"/>
</dbReference>
<dbReference type="PROSITE" id="PS51671">
    <property type="entry name" value="ACT"/>
    <property type="match status" value="2"/>
</dbReference>
<dbReference type="PROSITE" id="PS51831">
    <property type="entry name" value="HD"/>
    <property type="match status" value="1"/>
</dbReference>
<proteinExistence type="inferred from homology"/>
<evidence type="ECO:0000255" key="1">
    <source>
        <dbReference type="HAMAP-Rule" id="MF_00277"/>
    </source>
</evidence>
<evidence type="ECO:0000255" key="2">
    <source>
        <dbReference type="PROSITE-ProRule" id="PRU01175"/>
    </source>
</evidence>